<reference key="1">
    <citation type="journal article" date="2002" name="Nature">
        <title>The genome sequence of Schizosaccharomyces pombe.</title>
        <authorList>
            <person name="Wood V."/>
            <person name="Gwilliam R."/>
            <person name="Rajandream M.A."/>
            <person name="Lyne M.H."/>
            <person name="Lyne R."/>
            <person name="Stewart A."/>
            <person name="Sgouros J.G."/>
            <person name="Peat N."/>
            <person name="Hayles J."/>
            <person name="Baker S.G."/>
            <person name="Basham D."/>
            <person name="Bowman S."/>
            <person name="Brooks K."/>
            <person name="Brown D."/>
            <person name="Brown S."/>
            <person name="Chillingworth T."/>
            <person name="Churcher C.M."/>
            <person name="Collins M."/>
            <person name="Connor R."/>
            <person name="Cronin A."/>
            <person name="Davis P."/>
            <person name="Feltwell T."/>
            <person name="Fraser A."/>
            <person name="Gentles S."/>
            <person name="Goble A."/>
            <person name="Hamlin N."/>
            <person name="Harris D.E."/>
            <person name="Hidalgo J."/>
            <person name="Hodgson G."/>
            <person name="Holroyd S."/>
            <person name="Hornsby T."/>
            <person name="Howarth S."/>
            <person name="Huckle E.J."/>
            <person name="Hunt S."/>
            <person name="Jagels K."/>
            <person name="James K.D."/>
            <person name="Jones L."/>
            <person name="Jones M."/>
            <person name="Leather S."/>
            <person name="McDonald S."/>
            <person name="McLean J."/>
            <person name="Mooney P."/>
            <person name="Moule S."/>
            <person name="Mungall K.L."/>
            <person name="Murphy L.D."/>
            <person name="Niblett D."/>
            <person name="Odell C."/>
            <person name="Oliver K."/>
            <person name="O'Neil S."/>
            <person name="Pearson D."/>
            <person name="Quail M.A."/>
            <person name="Rabbinowitsch E."/>
            <person name="Rutherford K.M."/>
            <person name="Rutter S."/>
            <person name="Saunders D."/>
            <person name="Seeger K."/>
            <person name="Sharp S."/>
            <person name="Skelton J."/>
            <person name="Simmonds M.N."/>
            <person name="Squares R."/>
            <person name="Squares S."/>
            <person name="Stevens K."/>
            <person name="Taylor K."/>
            <person name="Taylor R.G."/>
            <person name="Tivey A."/>
            <person name="Walsh S.V."/>
            <person name="Warren T."/>
            <person name="Whitehead S."/>
            <person name="Woodward J.R."/>
            <person name="Volckaert G."/>
            <person name="Aert R."/>
            <person name="Robben J."/>
            <person name="Grymonprez B."/>
            <person name="Weltjens I."/>
            <person name="Vanstreels E."/>
            <person name="Rieger M."/>
            <person name="Schaefer M."/>
            <person name="Mueller-Auer S."/>
            <person name="Gabel C."/>
            <person name="Fuchs M."/>
            <person name="Duesterhoeft A."/>
            <person name="Fritzc C."/>
            <person name="Holzer E."/>
            <person name="Moestl D."/>
            <person name="Hilbert H."/>
            <person name="Borzym K."/>
            <person name="Langer I."/>
            <person name="Beck A."/>
            <person name="Lehrach H."/>
            <person name="Reinhardt R."/>
            <person name="Pohl T.M."/>
            <person name="Eger P."/>
            <person name="Zimmermann W."/>
            <person name="Wedler H."/>
            <person name="Wambutt R."/>
            <person name="Purnelle B."/>
            <person name="Goffeau A."/>
            <person name="Cadieu E."/>
            <person name="Dreano S."/>
            <person name="Gloux S."/>
            <person name="Lelaure V."/>
            <person name="Mottier S."/>
            <person name="Galibert F."/>
            <person name="Aves S.J."/>
            <person name="Xiang Z."/>
            <person name="Hunt C."/>
            <person name="Moore K."/>
            <person name="Hurst S.M."/>
            <person name="Lucas M."/>
            <person name="Rochet M."/>
            <person name="Gaillardin C."/>
            <person name="Tallada V.A."/>
            <person name="Garzon A."/>
            <person name="Thode G."/>
            <person name="Daga R.R."/>
            <person name="Cruzado L."/>
            <person name="Jimenez J."/>
            <person name="Sanchez M."/>
            <person name="del Rey F."/>
            <person name="Benito J."/>
            <person name="Dominguez A."/>
            <person name="Revuelta J.L."/>
            <person name="Moreno S."/>
            <person name="Armstrong J."/>
            <person name="Forsburg S.L."/>
            <person name="Cerutti L."/>
            <person name="Lowe T."/>
            <person name="McCombie W.R."/>
            <person name="Paulsen I."/>
            <person name="Potashkin J."/>
            <person name="Shpakovski G.V."/>
            <person name="Ussery D."/>
            <person name="Barrell B.G."/>
            <person name="Nurse P."/>
        </authorList>
    </citation>
    <scope>NUCLEOTIDE SEQUENCE [LARGE SCALE GENOMIC DNA]</scope>
    <source>
        <strain>972 / ATCC 24843</strain>
    </source>
</reference>
<reference key="2">
    <citation type="journal article" date="2005" name="Curr. Biol.">
        <title>A large-scale screen in S. pombe identifies seven novel genes required for critical meiotic events.</title>
        <authorList>
            <person name="Martin-Castellanos C."/>
            <person name="Blanco M."/>
            <person name="Rozalen A.E."/>
            <person name="Perez-Hidalgo L."/>
            <person name="Garcia A.I."/>
            <person name="Conde F."/>
            <person name="Mata J."/>
            <person name="Ellermeier C."/>
            <person name="Davis L."/>
            <person name="San-Segundo P."/>
            <person name="Smith G.R."/>
            <person name="Moreno S."/>
        </authorList>
    </citation>
    <scope>FUNCTION IN MEIOSIS</scope>
</reference>
<keyword id="KW-0469">Meiosis</keyword>
<keyword id="KW-0472">Membrane</keyword>
<keyword id="KW-1185">Reference proteome</keyword>
<keyword id="KW-0812">Transmembrane</keyword>
<keyword id="KW-1133">Transmembrane helix</keyword>
<comment type="function">
    <text evidence="2">Has a role in meiosis.</text>
</comment>
<comment type="subcellular location">
    <subcellularLocation>
        <location evidence="3">Membrane</location>
        <topology evidence="3">Multi-pass membrane protein</topology>
    </subcellularLocation>
</comment>
<dbReference type="EMBL" id="CU329672">
    <property type="protein sequence ID" value="CAA21223.1"/>
    <property type="molecule type" value="Genomic_DNA"/>
</dbReference>
<dbReference type="PIR" id="T41294">
    <property type="entry name" value="T41294"/>
</dbReference>
<dbReference type="RefSeq" id="NP_587899.1">
    <property type="nucleotide sequence ID" value="NM_001022891.2"/>
</dbReference>
<dbReference type="BioGRID" id="275307">
    <property type="interactions" value="9"/>
</dbReference>
<dbReference type="PaxDb" id="4896-SPCC31H12.06.1"/>
<dbReference type="EnsemblFungi" id="SPCC31H12.06.1">
    <property type="protein sequence ID" value="SPCC31H12.06.1:pep"/>
    <property type="gene ID" value="SPCC31H12.06"/>
</dbReference>
<dbReference type="GeneID" id="2538723"/>
<dbReference type="KEGG" id="spo:2538723"/>
<dbReference type="PomBase" id="SPCC31H12.06">
    <property type="gene designation" value="mug111"/>
</dbReference>
<dbReference type="VEuPathDB" id="FungiDB:SPCC31H12.06"/>
<dbReference type="HOGENOM" id="CLU_584164_0_0_1"/>
<dbReference type="InParanoid" id="O74872"/>
<dbReference type="OMA" id="SMEPIFH"/>
<dbReference type="PRO" id="PR:O74872"/>
<dbReference type="Proteomes" id="UP000002485">
    <property type="component" value="Chromosome III"/>
</dbReference>
<dbReference type="GO" id="GO:0005886">
    <property type="term" value="C:plasma membrane"/>
    <property type="evidence" value="ECO:0000303"/>
    <property type="project" value="PomBase"/>
</dbReference>
<dbReference type="GO" id="GO:0022857">
    <property type="term" value="F:transmembrane transporter activity"/>
    <property type="evidence" value="ECO:0000255"/>
    <property type="project" value="PomBase"/>
</dbReference>
<dbReference type="GO" id="GO:0051321">
    <property type="term" value="P:meiotic cell cycle"/>
    <property type="evidence" value="ECO:0007669"/>
    <property type="project" value="UniProtKB-KW"/>
</dbReference>
<dbReference type="InterPro" id="IPR036259">
    <property type="entry name" value="MFS_trans_sf"/>
</dbReference>
<dbReference type="SUPFAM" id="SSF103473">
    <property type="entry name" value="MFS general substrate transporter"/>
    <property type="match status" value="1"/>
</dbReference>
<gene>
    <name type="primary">mug111</name>
    <name type="ORF">SPCC31H12.06</name>
</gene>
<protein>
    <recommendedName>
        <fullName>Meiotically up-regulated gene 111 protein</fullName>
    </recommendedName>
</protein>
<feature type="chain" id="PRO_0000278505" description="Meiotically up-regulated gene 111 protein">
    <location>
        <begin position="1"/>
        <end position="468"/>
    </location>
</feature>
<feature type="transmembrane region" description="Helical" evidence="1">
    <location>
        <begin position="13"/>
        <end position="33"/>
    </location>
</feature>
<feature type="transmembrane region" description="Helical" evidence="1">
    <location>
        <begin position="59"/>
        <end position="79"/>
    </location>
</feature>
<feature type="transmembrane region" description="Helical" evidence="1">
    <location>
        <begin position="92"/>
        <end position="112"/>
    </location>
</feature>
<feature type="transmembrane region" description="Helical" evidence="1">
    <location>
        <begin position="116"/>
        <end position="136"/>
    </location>
</feature>
<feature type="transmembrane region" description="Helical" evidence="1">
    <location>
        <begin position="158"/>
        <end position="178"/>
    </location>
</feature>
<feature type="transmembrane region" description="Helical" evidence="1">
    <location>
        <begin position="190"/>
        <end position="210"/>
    </location>
</feature>
<feature type="transmembrane region" description="Helical" evidence="1">
    <location>
        <begin position="285"/>
        <end position="305"/>
    </location>
</feature>
<feature type="transmembrane region" description="Helical" evidence="1">
    <location>
        <begin position="330"/>
        <end position="350"/>
    </location>
</feature>
<feature type="transmembrane region" description="Helical" evidence="1">
    <location>
        <begin position="356"/>
        <end position="376"/>
    </location>
</feature>
<feature type="transmembrane region" description="Helical" evidence="1">
    <location>
        <begin position="382"/>
        <end position="402"/>
    </location>
</feature>
<feature type="transmembrane region" description="Helical" evidence="1">
    <location>
        <begin position="417"/>
        <end position="437"/>
    </location>
</feature>
<feature type="transmembrane region" description="Helical" evidence="1">
    <location>
        <begin position="446"/>
        <end position="466"/>
    </location>
</feature>
<evidence type="ECO:0000255" key="1"/>
<evidence type="ECO:0000269" key="2">
    <source>
    </source>
</evidence>
<evidence type="ECO:0000305" key="3"/>
<proteinExistence type="evidence at protein level"/>
<organism>
    <name type="scientific">Schizosaccharomyces pombe (strain 972 / ATCC 24843)</name>
    <name type="common">Fission yeast</name>
    <dbReference type="NCBI Taxonomy" id="284812"/>
    <lineage>
        <taxon>Eukaryota</taxon>
        <taxon>Fungi</taxon>
        <taxon>Dikarya</taxon>
        <taxon>Ascomycota</taxon>
        <taxon>Taphrinomycotina</taxon>
        <taxon>Schizosaccharomycetes</taxon>
        <taxon>Schizosaccharomycetales</taxon>
        <taxon>Schizosaccharomycetaceae</taxon>
        <taxon>Schizosaccharomyces</taxon>
    </lineage>
</organism>
<accession>O74872</accession>
<name>MU111_SCHPO</name>
<sequence length="468" mass="52617">MLSKKMKICRPSLVLIYLWYLVDCTSFSMNSVTCLRLMQLLLAKYYQIPIDLVGEKLSIVSASSCLLQYLVALVVVPFYSTIIKKLTPWFTVFTTWVGEEYFFFASTLSILYMDDFPTCAYFVIFSISFLLGISGTGPSLNASYKSLCKLYSYENSFIVVLNSIFVVSSCIGPFLGSILLLRVSLLQLYLISWTIHFINFVFHSLLAVFFSSKYTSYAQKEGQPILNATENLEVEYNALNTTPSSFEEQPLLNGLNDSPRNPVSRTNAEGFKALNASFDGSYKFPIPIVLLCFFLYSLLTPFFDIHLQFQLIVMHMSIVQVGFINSVKTFGSLLTCSVCLFLTYVGGFSVHMMKTTMLIGLTATTLIIFILYFATAQTLPCLALFYGITSSIGPSIHGLVAAYVPNDKPHRYWKFTALLEASATFISYPFQSLAFIVCLKYCSFYFFIGPICICLLGSISSYLLLGYH</sequence>